<proteinExistence type="inferred from homology"/>
<organism>
    <name type="scientific">Streptococcus agalactiae serotype Ia (strain ATCC 27591 / A909 / CDC SS700)</name>
    <dbReference type="NCBI Taxonomy" id="205921"/>
    <lineage>
        <taxon>Bacteria</taxon>
        <taxon>Bacillati</taxon>
        <taxon>Bacillota</taxon>
        <taxon>Bacilli</taxon>
        <taxon>Lactobacillales</taxon>
        <taxon>Streptococcaceae</taxon>
        <taxon>Streptococcus</taxon>
    </lineage>
</organism>
<comment type="catalytic activity">
    <reaction evidence="1">
        <text>thymidine + ATP = dTMP + ADP + H(+)</text>
        <dbReference type="Rhea" id="RHEA:19129"/>
        <dbReference type="ChEBI" id="CHEBI:15378"/>
        <dbReference type="ChEBI" id="CHEBI:17748"/>
        <dbReference type="ChEBI" id="CHEBI:30616"/>
        <dbReference type="ChEBI" id="CHEBI:63528"/>
        <dbReference type="ChEBI" id="CHEBI:456216"/>
        <dbReference type="EC" id="2.7.1.21"/>
    </reaction>
</comment>
<comment type="subunit">
    <text evidence="1">Homotetramer.</text>
</comment>
<comment type="subcellular location">
    <subcellularLocation>
        <location evidence="1">Cytoplasm</location>
    </subcellularLocation>
</comment>
<comment type="similarity">
    <text evidence="1">Belongs to the thymidine kinase family.</text>
</comment>
<gene>
    <name evidence="1" type="primary">tdk</name>
    <name type="ordered locus">SAK_1164</name>
</gene>
<sequence length="189" mass="21593">MAQLYYKYGTMNSGKTIEILKVAHNYEEQGKPVVIMTSALDTRDEFGVVSSRIGMRREAVPISDDMDIFSYIQNLPQKPYCVLIDECQFLSKKNVYDLARVVDDLDVPVMAFGLKNDFQNNLFEGSKHLLLLADKIDEIKTICQYCSKKATMVLRTENGKPVYEGDQIQIGGNETYIPVCRKHYFNPDI</sequence>
<accession>Q3K118</accession>
<name>KITH_STRA1</name>
<evidence type="ECO:0000255" key="1">
    <source>
        <dbReference type="HAMAP-Rule" id="MF_00124"/>
    </source>
</evidence>
<dbReference type="EC" id="2.7.1.21" evidence="1"/>
<dbReference type="EMBL" id="CP000114">
    <property type="protein sequence ID" value="ABA45912.1"/>
    <property type="molecule type" value="Genomic_DNA"/>
</dbReference>
<dbReference type="RefSeq" id="WP_000068109.1">
    <property type="nucleotide sequence ID" value="NC_007432.1"/>
</dbReference>
<dbReference type="SMR" id="Q3K118"/>
<dbReference type="KEGG" id="sak:SAK_1164"/>
<dbReference type="HOGENOM" id="CLU_064400_2_2_9"/>
<dbReference type="GO" id="GO:0005829">
    <property type="term" value="C:cytosol"/>
    <property type="evidence" value="ECO:0007669"/>
    <property type="project" value="TreeGrafter"/>
</dbReference>
<dbReference type="GO" id="GO:0005524">
    <property type="term" value="F:ATP binding"/>
    <property type="evidence" value="ECO:0007669"/>
    <property type="project" value="UniProtKB-UniRule"/>
</dbReference>
<dbReference type="GO" id="GO:0004797">
    <property type="term" value="F:thymidine kinase activity"/>
    <property type="evidence" value="ECO:0007669"/>
    <property type="project" value="UniProtKB-UniRule"/>
</dbReference>
<dbReference type="GO" id="GO:0008270">
    <property type="term" value="F:zinc ion binding"/>
    <property type="evidence" value="ECO:0007669"/>
    <property type="project" value="UniProtKB-UniRule"/>
</dbReference>
<dbReference type="GO" id="GO:0071897">
    <property type="term" value="P:DNA biosynthetic process"/>
    <property type="evidence" value="ECO:0007669"/>
    <property type="project" value="UniProtKB-KW"/>
</dbReference>
<dbReference type="GO" id="GO:0046104">
    <property type="term" value="P:thymidine metabolic process"/>
    <property type="evidence" value="ECO:0007669"/>
    <property type="project" value="TreeGrafter"/>
</dbReference>
<dbReference type="Gene3D" id="3.30.60.20">
    <property type="match status" value="1"/>
</dbReference>
<dbReference type="Gene3D" id="3.40.50.300">
    <property type="entry name" value="P-loop containing nucleotide triphosphate hydrolases"/>
    <property type="match status" value="1"/>
</dbReference>
<dbReference type="HAMAP" id="MF_00124">
    <property type="entry name" value="Thymidine_kinase"/>
    <property type="match status" value="1"/>
</dbReference>
<dbReference type="InterPro" id="IPR027417">
    <property type="entry name" value="P-loop_NTPase"/>
</dbReference>
<dbReference type="InterPro" id="IPR001267">
    <property type="entry name" value="Thymidine_kinase"/>
</dbReference>
<dbReference type="InterPro" id="IPR020633">
    <property type="entry name" value="Thymidine_kinase_CS"/>
</dbReference>
<dbReference type="NCBIfam" id="NF003299">
    <property type="entry name" value="PRK04296.1-4"/>
    <property type="match status" value="1"/>
</dbReference>
<dbReference type="NCBIfam" id="NF003300">
    <property type="entry name" value="PRK04296.1-5"/>
    <property type="match status" value="1"/>
</dbReference>
<dbReference type="PANTHER" id="PTHR11441">
    <property type="entry name" value="THYMIDINE KINASE"/>
    <property type="match status" value="1"/>
</dbReference>
<dbReference type="PANTHER" id="PTHR11441:SF0">
    <property type="entry name" value="THYMIDINE KINASE, CYTOSOLIC"/>
    <property type="match status" value="1"/>
</dbReference>
<dbReference type="Pfam" id="PF00265">
    <property type="entry name" value="TK"/>
    <property type="match status" value="1"/>
</dbReference>
<dbReference type="PIRSF" id="PIRSF035805">
    <property type="entry name" value="TK_cell"/>
    <property type="match status" value="1"/>
</dbReference>
<dbReference type="SUPFAM" id="SSF57716">
    <property type="entry name" value="Glucocorticoid receptor-like (DNA-binding domain)"/>
    <property type="match status" value="1"/>
</dbReference>
<dbReference type="SUPFAM" id="SSF52540">
    <property type="entry name" value="P-loop containing nucleoside triphosphate hydrolases"/>
    <property type="match status" value="1"/>
</dbReference>
<dbReference type="PROSITE" id="PS00603">
    <property type="entry name" value="TK_CELLULAR_TYPE"/>
    <property type="match status" value="1"/>
</dbReference>
<protein>
    <recommendedName>
        <fullName evidence="1">Thymidine kinase</fullName>
        <ecNumber evidence="1">2.7.1.21</ecNumber>
    </recommendedName>
</protein>
<reference key="1">
    <citation type="journal article" date="2005" name="Proc. Natl. Acad. Sci. U.S.A.">
        <title>Genome analysis of multiple pathogenic isolates of Streptococcus agalactiae: implications for the microbial 'pan-genome'.</title>
        <authorList>
            <person name="Tettelin H."/>
            <person name="Masignani V."/>
            <person name="Cieslewicz M.J."/>
            <person name="Donati C."/>
            <person name="Medini D."/>
            <person name="Ward N.L."/>
            <person name="Angiuoli S.V."/>
            <person name="Crabtree J."/>
            <person name="Jones A.L."/>
            <person name="Durkin A.S."/>
            <person name="DeBoy R.T."/>
            <person name="Davidsen T.M."/>
            <person name="Mora M."/>
            <person name="Scarselli M."/>
            <person name="Margarit y Ros I."/>
            <person name="Peterson J.D."/>
            <person name="Hauser C.R."/>
            <person name="Sundaram J.P."/>
            <person name="Nelson W.C."/>
            <person name="Madupu R."/>
            <person name="Brinkac L.M."/>
            <person name="Dodson R.J."/>
            <person name="Rosovitz M.J."/>
            <person name="Sullivan S.A."/>
            <person name="Daugherty S.C."/>
            <person name="Haft D.H."/>
            <person name="Selengut J."/>
            <person name="Gwinn M.L."/>
            <person name="Zhou L."/>
            <person name="Zafar N."/>
            <person name="Khouri H."/>
            <person name="Radune D."/>
            <person name="Dimitrov G."/>
            <person name="Watkins K."/>
            <person name="O'Connor K.J."/>
            <person name="Smith S."/>
            <person name="Utterback T.R."/>
            <person name="White O."/>
            <person name="Rubens C.E."/>
            <person name="Grandi G."/>
            <person name="Madoff L.C."/>
            <person name="Kasper D.L."/>
            <person name="Telford J.L."/>
            <person name="Wessels M.R."/>
            <person name="Rappuoli R."/>
            <person name="Fraser C.M."/>
        </authorList>
    </citation>
    <scope>NUCLEOTIDE SEQUENCE [LARGE SCALE GENOMIC DNA]</scope>
    <source>
        <strain>ATCC 27591 / A909 / CDC SS700</strain>
    </source>
</reference>
<keyword id="KW-0067">ATP-binding</keyword>
<keyword id="KW-0963">Cytoplasm</keyword>
<keyword id="KW-0237">DNA synthesis</keyword>
<keyword id="KW-0418">Kinase</keyword>
<keyword id="KW-0479">Metal-binding</keyword>
<keyword id="KW-0547">Nucleotide-binding</keyword>
<keyword id="KW-0808">Transferase</keyword>
<keyword id="KW-0862">Zinc</keyword>
<feature type="chain" id="PRO_0000242810" description="Thymidine kinase">
    <location>
        <begin position="1"/>
        <end position="189"/>
    </location>
</feature>
<feature type="active site" description="Proton acceptor" evidence="1">
    <location>
        <position position="86"/>
    </location>
</feature>
<feature type="binding site" evidence="1">
    <location>
        <begin position="9"/>
        <end position="16"/>
    </location>
    <ligand>
        <name>ATP</name>
        <dbReference type="ChEBI" id="CHEBI:30616"/>
    </ligand>
</feature>
<feature type="binding site" evidence="1">
    <location>
        <begin position="85"/>
        <end position="88"/>
    </location>
    <ligand>
        <name>ATP</name>
        <dbReference type="ChEBI" id="CHEBI:30616"/>
    </ligand>
</feature>
<feature type="binding site" evidence="1">
    <location>
        <position position="143"/>
    </location>
    <ligand>
        <name>Zn(2+)</name>
        <dbReference type="ChEBI" id="CHEBI:29105"/>
    </ligand>
</feature>
<feature type="binding site" evidence="1">
    <location>
        <position position="146"/>
    </location>
    <ligand>
        <name>Zn(2+)</name>
        <dbReference type="ChEBI" id="CHEBI:29105"/>
    </ligand>
</feature>
<feature type="binding site" evidence="1">
    <location>
        <position position="180"/>
    </location>
    <ligand>
        <name>Zn(2+)</name>
        <dbReference type="ChEBI" id="CHEBI:29105"/>
    </ligand>
</feature>
<feature type="binding site" evidence="1">
    <location>
        <position position="183"/>
    </location>
    <ligand>
        <name>Zn(2+)</name>
        <dbReference type="ChEBI" id="CHEBI:29105"/>
    </ligand>
</feature>